<name>CARB_LATSS</name>
<comment type="function">
    <text evidence="1">Large subunit of the glutamine-dependent carbamoyl phosphate synthetase (CPSase). CPSase catalyzes the formation of carbamoyl phosphate from the ammonia moiety of glutamine, carbonate, and phosphate donated by ATP, constituting the first step of 2 biosynthetic pathways, one leading to arginine and/or urea and the other to pyrimidine nucleotides. The large subunit (synthetase) binds the substrates ammonia (free or transferred from glutamine from the small subunit), hydrogencarbonate and ATP and carries out an ATP-coupled ligase reaction, activating hydrogencarbonate by forming carboxy phosphate which reacts with ammonia to form carbamoyl phosphate.</text>
</comment>
<comment type="catalytic activity">
    <reaction evidence="1">
        <text>hydrogencarbonate + L-glutamine + 2 ATP + H2O = carbamoyl phosphate + L-glutamate + 2 ADP + phosphate + 2 H(+)</text>
        <dbReference type="Rhea" id="RHEA:18633"/>
        <dbReference type="ChEBI" id="CHEBI:15377"/>
        <dbReference type="ChEBI" id="CHEBI:15378"/>
        <dbReference type="ChEBI" id="CHEBI:17544"/>
        <dbReference type="ChEBI" id="CHEBI:29985"/>
        <dbReference type="ChEBI" id="CHEBI:30616"/>
        <dbReference type="ChEBI" id="CHEBI:43474"/>
        <dbReference type="ChEBI" id="CHEBI:58228"/>
        <dbReference type="ChEBI" id="CHEBI:58359"/>
        <dbReference type="ChEBI" id="CHEBI:456216"/>
        <dbReference type="EC" id="6.3.5.5"/>
    </reaction>
</comment>
<comment type="catalytic activity">
    <molecule>Carbamoyl phosphate synthase large chain</molecule>
    <reaction evidence="1">
        <text>hydrogencarbonate + NH4(+) + 2 ATP = carbamoyl phosphate + 2 ADP + phosphate + 2 H(+)</text>
        <dbReference type="Rhea" id="RHEA:18029"/>
        <dbReference type="ChEBI" id="CHEBI:15378"/>
        <dbReference type="ChEBI" id="CHEBI:17544"/>
        <dbReference type="ChEBI" id="CHEBI:28938"/>
        <dbReference type="ChEBI" id="CHEBI:30616"/>
        <dbReference type="ChEBI" id="CHEBI:43474"/>
        <dbReference type="ChEBI" id="CHEBI:58228"/>
        <dbReference type="ChEBI" id="CHEBI:456216"/>
        <dbReference type="EC" id="6.3.4.16"/>
    </reaction>
</comment>
<comment type="cofactor">
    <cofactor evidence="1">
        <name>Mg(2+)</name>
        <dbReference type="ChEBI" id="CHEBI:18420"/>
    </cofactor>
    <cofactor evidence="1">
        <name>Mn(2+)</name>
        <dbReference type="ChEBI" id="CHEBI:29035"/>
    </cofactor>
    <text evidence="1">Binds 4 Mg(2+) or Mn(2+) ions per subunit.</text>
</comment>
<comment type="pathway">
    <text evidence="1">Amino-acid biosynthesis; L-arginine biosynthesis; carbamoyl phosphate from bicarbonate: step 1/1.</text>
</comment>
<comment type="pathway">
    <text evidence="1">Pyrimidine metabolism; UMP biosynthesis via de novo pathway; (S)-dihydroorotate from bicarbonate: step 1/3.</text>
</comment>
<comment type="subunit">
    <text evidence="1">Composed of two chains; the small (or glutamine) chain promotes the hydrolysis of glutamine to ammonia, which is used by the large (or ammonia) chain to synthesize carbamoyl phosphate. Tetramer of heterodimers (alpha,beta)4.</text>
</comment>
<comment type="domain">
    <text evidence="1">The large subunit is composed of 2 ATP-grasp domains that are involved in binding the 2 ATP molecules needed for carbamoyl phosphate synthesis. The N-terminal ATP-grasp domain (referred to as the carboxyphosphate synthetic component) catalyzes the ATP-dependent phosphorylation of hydrogencarbonate to carboxyphosphate and the subsequent nucleophilic attack by ammonia to form a carbamate intermediate. The C-terminal ATP-grasp domain (referred to as the carbamoyl phosphate synthetic component) then catalyzes the phosphorylation of carbamate with the second ATP to form the end product carbamoyl phosphate. The reactive and unstable enzyme intermediates are sequentially channeled from one active site to the next through the interior of the protein over a distance of at least 96 A.</text>
</comment>
<comment type="similarity">
    <text evidence="1">Belongs to the CarB family.</text>
</comment>
<accession>Q38X24</accession>
<evidence type="ECO:0000255" key="1">
    <source>
        <dbReference type="HAMAP-Rule" id="MF_01210"/>
    </source>
</evidence>
<proteinExistence type="inferred from homology"/>
<reference key="1">
    <citation type="journal article" date="2005" name="Nat. Biotechnol.">
        <title>The complete genome sequence of the meat-borne lactic acid bacterium Lactobacillus sakei 23K.</title>
        <authorList>
            <person name="Chaillou S."/>
            <person name="Champomier-Verges M.-C."/>
            <person name="Cornet M."/>
            <person name="Crutz-Le Coq A.-M."/>
            <person name="Dudez A.-M."/>
            <person name="Martin V."/>
            <person name="Beaufils S."/>
            <person name="Darbon-Rongere E."/>
            <person name="Bossy R."/>
            <person name="Loux V."/>
            <person name="Zagorec M."/>
        </authorList>
    </citation>
    <scope>NUCLEOTIDE SEQUENCE [LARGE SCALE GENOMIC DNA]</scope>
    <source>
        <strain>23K</strain>
    </source>
</reference>
<protein>
    <recommendedName>
        <fullName evidence="1">Carbamoyl phosphate synthase large chain</fullName>
        <ecNumber evidence="1">6.3.4.16</ecNumber>
        <ecNumber evidence="1">6.3.5.5</ecNumber>
    </recommendedName>
    <alternativeName>
        <fullName evidence="1">Carbamoyl phosphate synthetase ammonia chain</fullName>
    </alternativeName>
</protein>
<gene>
    <name evidence="1" type="primary">carB</name>
    <name type="ordered locus">LCA_0955</name>
</gene>
<dbReference type="EC" id="6.3.4.16" evidence="1"/>
<dbReference type="EC" id="6.3.5.5" evidence="1"/>
<dbReference type="EMBL" id="CR936503">
    <property type="protein sequence ID" value="CAI55257.1"/>
    <property type="molecule type" value="Genomic_DNA"/>
</dbReference>
<dbReference type="RefSeq" id="WP_011374657.1">
    <property type="nucleotide sequence ID" value="NC_007576.1"/>
</dbReference>
<dbReference type="SMR" id="Q38X24"/>
<dbReference type="STRING" id="314315.LCA_0955"/>
<dbReference type="KEGG" id="lsa:LCA_0955"/>
<dbReference type="eggNOG" id="COG0458">
    <property type="taxonomic scope" value="Bacteria"/>
</dbReference>
<dbReference type="HOGENOM" id="CLU_000513_1_0_9"/>
<dbReference type="OrthoDB" id="9804197at2"/>
<dbReference type="UniPathway" id="UPA00068">
    <property type="reaction ID" value="UER00171"/>
</dbReference>
<dbReference type="UniPathway" id="UPA00070">
    <property type="reaction ID" value="UER00115"/>
</dbReference>
<dbReference type="Proteomes" id="UP000002707">
    <property type="component" value="Chromosome"/>
</dbReference>
<dbReference type="GO" id="GO:0005737">
    <property type="term" value="C:cytoplasm"/>
    <property type="evidence" value="ECO:0007669"/>
    <property type="project" value="TreeGrafter"/>
</dbReference>
<dbReference type="GO" id="GO:0005524">
    <property type="term" value="F:ATP binding"/>
    <property type="evidence" value="ECO:0007669"/>
    <property type="project" value="UniProtKB-UniRule"/>
</dbReference>
<dbReference type="GO" id="GO:0004087">
    <property type="term" value="F:carbamoyl-phosphate synthase (ammonia) activity"/>
    <property type="evidence" value="ECO:0007669"/>
    <property type="project" value="RHEA"/>
</dbReference>
<dbReference type="GO" id="GO:0004088">
    <property type="term" value="F:carbamoyl-phosphate synthase (glutamine-hydrolyzing) activity"/>
    <property type="evidence" value="ECO:0007669"/>
    <property type="project" value="UniProtKB-UniRule"/>
</dbReference>
<dbReference type="GO" id="GO:0046872">
    <property type="term" value="F:metal ion binding"/>
    <property type="evidence" value="ECO:0007669"/>
    <property type="project" value="UniProtKB-KW"/>
</dbReference>
<dbReference type="GO" id="GO:0044205">
    <property type="term" value="P:'de novo' UMP biosynthetic process"/>
    <property type="evidence" value="ECO:0007669"/>
    <property type="project" value="UniProtKB-UniRule"/>
</dbReference>
<dbReference type="GO" id="GO:0006541">
    <property type="term" value="P:glutamine metabolic process"/>
    <property type="evidence" value="ECO:0007669"/>
    <property type="project" value="TreeGrafter"/>
</dbReference>
<dbReference type="GO" id="GO:0006526">
    <property type="term" value="P:L-arginine biosynthetic process"/>
    <property type="evidence" value="ECO:0007669"/>
    <property type="project" value="UniProtKB-UniRule"/>
</dbReference>
<dbReference type="CDD" id="cd01424">
    <property type="entry name" value="MGS_CPS_II"/>
    <property type="match status" value="1"/>
</dbReference>
<dbReference type="FunFam" id="1.10.1030.10:FF:000002">
    <property type="entry name" value="Carbamoyl-phosphate synthase large chain"/>
    <property type="match status" value="1"/>
</dbReference>
<dbReference type="FunFam" id="3.30.1490.20:FF:000001">
    <property type="entry name" value="Carbamoyl-phosphate synthase large chain"/>
    <property type="match status" value="1"/>
</dbReference>
<dbReference type="FunFam" id="3.30.470.20:FF:000001">
    <property type="entry name" value="Carbamoyl-phosphate synthase large chain"/>
    <property type="match status" value="1"/>
</dbReference>
<dbReference type="FunFam" id="3.30.470.20:FF:000026">
    <property type="entry name" value="Carbamoyl-phosphate synthase large chain"/>
    <property type="match status" value="1"/>
</dbReference>
<dbReference type="FunFam" id="3.40.50.20:FF:000001">
    <property type="entry name" value="Carbamoyl-phosphate synthase large chain"/>
    <property type="match status" value="2"/>
</dbReference>
<dbReference type="Gene3D" id="3.40.50.20">
    <property type="match status" value="2"/>
</dbReference>
<dbReference type="Gene3D" id="3.30.1490.20">
    <property type="entry name" value="ATP-grasp fold, A domain"/>
    <property type="match status" value="1"/>
</dbReference>
<dbReference type="Gene3D" id="3.30.470.20">
    <property type="entry name" value="ATP-grasp fold, B domain"/>
    <property type="match status" value="2"/>
</dbReference>
<dbReference type="Gene3D" id="1.10.1030.10">
    <property type="entry name" value="Carbamoyl-phosphate synthetase, large subunit oligomerisation domain"/>
    <property type="match status" value="1"/>
</dbReference>
<dbReference type="Gene3D" id="3.40.50.1380">
    <property type="entry name" value="Methylglyoxal synthase-like domain"/>
    <property type="match status" value="1"/>
</dbReference>
<dbReference type="HAMAP" id="MF_01210_A">
    <property type="entry name" value="CPSase_L_chain_A"/>
    <property type="match status" value="1"/>
</dbReference>
<dbReference type="HAMAP" id="MF_01210_B">
    <property type="entry name" value="CPSase_L_chain_B"/>
    <property type="match status" value="1"/>
</dbReference>
<dbReference type="InterPro" id="IPR011761">
    <property type="entry name" value="ATP-grasp"/>
</dbReference>
<dbReference type="InterPro" id="IPR013815">
    <property type="entry name" value="ATP_grasp_subdomain_1"/>
</dbReference>
<dbReference type="InterPro" id="IPR006275">
    <property type="entry name" value="CarbamoylP_synth_lsu"/>
</dbReference>
<dbReference type="InterPro" id="IPR005480">
    <property type="entry name" value="CarbamoylP_synth_lsu_oligo"/>
</dbReference>
<dbReference type="InterPro" id="IPR036897">
    <property type="entry name" value="CarbamoylP_synth_lsu_oligo_sf"/>
</dbReference>
<dbReference type="InterPro" id="IPR005479">
    <property type="entry name" value="CbamoylP_synth_lsu-like_ATP-bd"/>
</dbReference>
<dbReference type="InterPro" id="IPR005483">
    <property type="entry name" value="CbamoylP_synth_lsu_CPSase_dom"/>
</dbReference>
<dbReference type="InterPro" id="IPR011607">
    <property type="entry name" value="MGS-like_dom"/>
</dbReference>
<dbReference type="InterPro" id="IPR036914">
    <property type="entry name" value="MGS-like_dom_sf"/>
</dbReference>
<dbReference type="InterPro" id="IPR033937">
    <property type="entry name" value="MGS_CPS_CarB"/>
</dbReference>
<dbReference type="InterPro" id="IPR016185">
    <property type="entry name" value="PreATP-grasp_dom_sf"/>
</dbReference>
<dbReference type="NCBIfam" id="TIGR01369">
    <property type="entry name" value="CPSaseII_lrg"/>
    <property type="match status" value="1"/>
</dbReference>
<dbReference type="NCBIfam" id="NF003671">
    <property type="entry name" value="PRK05294.1"/>
    <property type="match status" value="1"/>
</dbReference>
<dbReference type="NCBIfam" id="NF009455">
    <property type="entry name" value="PRK12815.1"/>
    <property type="match status" value="1"/>
</dbReference>
<dbReference type="PANTHER" id="PTHR11405:SF53">
    <property type="entry name" value="CARBAMOYL-PHOSPHATE SYNTHASE [AMMONIA], MITOCHONDRIAL"/>
    <property type="match status" value="1"/>
</dbReference>
<dbReference type="PANTHER" id="PTHR11405">
    <property type="entry name" value="CARBAMOYLTRANSFERASE FAMILY MEMBER"/>
    <property type="match status" value="1"/>
</dbReference>
<dbReference type="Pfam" id="PF02786">
    <property type="entry name" value="CPSase_L_D2"/>
    <property type="match status" value="2"/>
</dbReference>
<dbReference type="Pfam" id="PF02787">
    <property type="entry name" value="CPSase_L_D3"/>
    <property type="match status" value="1"/>
</dbReference>
<dbReference type="Pfam" id="PF02142">
    <property type="entry name" value="MGS"/>
    <property type="match status" value="1"/>
</dbReference>
<dbReference type="PRINTS" id="PR00098">
    <property type="entry name" value="CPSASE"/>
</dbReference>
<dbReference type="SMART" id="SM01096">
    <property type="entry name" value="CPSase_L_D3"/>
    <property type="match status" value="1"/>
</dbReference>
<dbReference type="SMART" id="SM00851">
    <property type="entry name" value="MGS"/>
    <property type="match status" value="1"/>
</dbReference>
<dbReference type="SUPFAM" id="SSF48108">
    <property type="entry name" value="Carbamoyl phosphate synthetase, large subunit connection domain"/>
    <property type="match status" value="1"/>
</dbReference>
<dbReference type="SUPFAM" id="SSF56059">
    <property type="entry name" value="Glutathione synthetase ATP-binding domain-like"/>
    <property type="match status" value="2"/>
</dbReference>
<dbReference type="SUPFAM" id="SSF52335">
    <property type="entry name" value="Methylglyoxal synthase-like"/>
    <property type="match status" value="1"/>
</dbReference>
<dbReference type="SUPFAM" id="SSF52440">
    <property type="entry name" value="PreATP-grasp domain"/>
    <property type="match status" value="2"/>
</dbReference>
<dbReference type="PROSITE" id="PS50975">
    <property type="entry name" value="ATP_GRASP"/>
    <property type="match status" value="2"/>
</dbReference>
<dbReference type="PROSITE" id="PS00866">
    <property type="entry name" value="CPSASE_1"/>
    <property type="match status" value="2"/>
</dbReference>
<dbReference type="PROSITE" id="PS00867">
    <property type="entry name" value="CPSASE_2"/>
    <property type="match status" value="2"/>
</dbReference>
<dbReference type="PROSITE" id="PS51855">
    <property type="entry name" value="MGS"/>
    <property type="match status" value="1"/>
</dbReference>
<keyword id="KW-0028">Amino-acid biosynthesis</keyword>
<keyword id="KW-0055">Arginine biosynthesis</keyword>
<keyword id="KW-0067">ATP-binding</keyword>
<keyword id="KW-0436">Ligase</keyword>
<keyword id="KW-0460">Magnesium</keyword>
<keyword id="KW-0464">Manganese</keyword>
<keyword id="KW-0479">Metal-binding</keyword>
<keyword id="KW-0547">Nucleotide-binding</keyword>
<keyword id="KW-0665">Pyrimidine biosynthesis</keyword>
<keyword id="KW-1185">Reference proteome</keyword>
<keyword id="KW-0677">Repeat</keyword>
<sequence length="1060" mass="116018">MPKRTDIRKILVIGSGPIVIGQAAEFDYSGTQACLALKEEGYQVVLINSNPATIMTDKTVADTVYIEPITLDFVTQILRKELPDAILPTLGGQTGLNMALELANCGILAELNIELLGTKLSAIDQAEDRELFKNLMNQLNEPIPESAIAHSLDDAQEFVKQNGFPVIIRPAFTLGGTGGGIAENAGQLKTIVKNGIALSPVGQVLVEQSIAGYKEIEFEVMRDRNDNALVVCNMENFDPVGIHTGDSIVFAPVQTLSDREVQMLRDASLKIIRALKIEGGCNVQLALDPNSERYFIIEVNPRVSRSSALASKATGYPIAKMAAKIAVGLTLDEIYNPITGTTYAQFEPMLDYVVAKIPRWPFDKFNKGDRQLGTQMKATGEVMAIGRNIEESLLKAVRSLEIGTAHLELDGLTSVSDNDLVQRIIHPQDDRLFYLAEALRRGYLIQELAELTKIDLFFLDKISHIVELEEQLRSEKGDVELLEIVKKNGFSDEKIAKTWQITPIQVRQMRQESGIQPVYKMVDTCAAEFESQTPYYYTTYEQENESLVSAKPSILVIGSGPIRIGQGVEFDYATVHCVQAIQKAGYEAIIMNSNPETVSTDFSISDKLYFEPLTLEDVLNVVELEKPEGVIVQFGGQTAINLAAPLEENGVKILGTSVANLDRAEDRDLFDQLIQELNIPQPVGKTATNAPDALTIATEIGYPVLIRPSFVLGGRAMEIVHTPEDLTHYMQEAVKVSDEHPVLIDRYLMGKECEVDAICDGQEVLIPGIMEHIERAGVHSGDSMAVYPPQNLTEDQKAAIIDYTTKLCLALDCHGLLNIQFIIQNDEVYVIEVNPRASRTVPFLSKVTQIPMAQLATQLILGSTLAELKSPTGLLPAGPLIHVKAPVFSFSKLTRVDSLLGPEMKSTGEVMGTDVTMQKALYKAFEASGMHLPSHGNVLMTVTNQDKAQALALAERFREVGYQIIATPGTTQQFKAAGIPVQQVDKINATSGDLLDKIKAGHIQLVINTTGLNEAPQVAKDSIVIRQTAIEHGIPLLTSLDTTDAILTVLESQSLLTKPL</sequence>
<organism>
    <name type="scientific">Latilactobacillus sakei subsp. sakei (strain 23K)</name>
    <name type="common">Lactobacillus sakei subsp. sakei</name>
    <dbReference type="NCBI Taxonomy" id="314315"/>
    <lineage>
        <taxon>Bacteria</taxon>
        <taxon>Bacillati</taxon>
        <taxon>Bacillota</taxon>
        <taxon>Bacilli</taxon>
        <taxon>Lactobacillales</taxon>
        <taxon>Lactobacillaceae</taxon>
        <taxon>Latilactobacillus</taxon>
    </lineage>
</organism>
<feature type="chain" id="PRO_1000066359" description="Carbamoyl phosphate synthase large chain">
    <location>
        <begin position="1"/>
        <end position="1060"/>
    </location>
</feature>
<feature type="domain" description="ATP-grasp 1" evidence="1">
    <location>
        <begin position="133"/>
        <end position="327"/>
    </location>
</feature>
<feature type="domain" description="ATP-grasp 2" evidence="1">
    <location>
        <begin position="671"/>
        <end position="861"/>
    </location>
</feature>
<feature type="domain" description="MGS-like" evidence="1">
    <location>
        <begin position="930"/>
        <end position="1060"/>
    </location>
</feature>
<feature type="region of interest" description="Carboxyphosphate synthetic domain" evidence="1">
    <location>
        <begin position="1"/>
        <end position="401"/>
    </location>
</feature>
<feature type="region of interest" description="Oligomerization domain" evidence="1">
    <location>
        <begin position="402"/>
        <end position="546"/>
    </location>
</feature>
<feature type="region of interest" description="Carbamoyl phosphate synthetic domain" evidence="1">
    <location>
        <begin position="547"/>
        <end position="929"/>
    </location>
</feature>
<feature type="region of interest" description="Allosteric domain" evidence="1">
    <location>
        <begin position="930"/>
        <end position="1060"/>
    </location>
</feature>
<feature type="binding site" evidence="1">
    <location>
        <position position="129"/>
    </location>
    <ligand>
        <name>ATP</name>
        <dbReference type="ChEBI" id="CHEBI:30616"/>
        <label>1</label>
    </ligand>
</feature>
<feature type="binding site" evidence="1">
    <location>
        <position position="169"/>
    </location>
    <ligand>
        <name>ATP</name>
        <dbReference type="ChEBI" id="CHEBI:30616"/>
        <label>1</label>
    </ligand>
</feature>
<feature type="binding site" evidence="1">
    <location>
        <position position="175"/>
    </location>
    <ligand>
        <name>ATP</name>
        <dbReference type="ChEBI" id="CHEBI:30616"/>
        <label>1</label>
    </ligand>
</feature>
<feature type="binding site" evidence="1">
    <location>
        <position position="176"/>
    </location>
    <ligand>
        <name>ATP</name>
        <dbReference type="ChEBI" id="CHEBI:30616"/>
        <label>1</label>
    </ligand>
</feature>
<feature type="binding site" evidence="1">
    <location>
        <position position="208"/>
    </location>
    <ligand>
        <name>ATP</name>
        <dbReference type="ChEBI" id="CHEBI:30616"/>
        <label>1</label>
    </ligand>
</feature>
<feature type="binding site" evidence="1">
    <location>
        <position position="210"/>
    </location>
    <ligand>
        <name>ATP</name>
        <dbReference type="ChEBI" id="CHEBI:30616"/>
        <label>1</label>
    </ligand>
</feature>
<feature type="binding site" evidence="1">
    <location>
        <position position="215"/>
    </location>
    <ligand>
        <name>ATP</name>
        <dbReference type="ChEBI" id="CHEBI:30616"/>
        <label>1</label>
    </ligand>
</feature>
<feature type="binding site" evidence="1">
    <location>
        <position position="241"/>
    </location>
    <ligand>
        <name>ATP</name>
        <dbReference type="ChEBI" id="CHEBI:30616"/>
        <label>1</label>
    </ligand>
</feature>
<feature type="binding site" evidence="1">
    <location>
        <position position="242"/>
    </location>
    <ligand>
        <name>ATP</name>
        <dbReference type="ChEBI" id="CHEBI:30616"/>
        <label>1</label>
    </ligand>
</feature>
<feature type="binding site" evidence="1">
    <location>
        <position position="243"/>
    </location>
    <ligand>
        <name>ATP</name>
        <dbReference type="ChEBI" id="CHEBI:30616"/>
        <label>1</label>
    </ligand>
</feature>
<feature type="binding site" evidence="1">
    <location>
        <position position="284"/>
    </location>
    <ligand>
        <name>ATP</name>
        <dbReference type="ChEBI" id="CHEBI:30616"/>
        <label>1</label>
    </ligand>
</feature>
<feature type="binding site" evidence="1">
    <location>
        <position position="284"/>
    </location>
    <ligand>
        <name>Mg(2+)</name>
        <dbReference type="ChEBI" id="CHEBI:18420"/>
        <label>1</label>
    </ligand>
</feature>
<feature type="binding site" evidence="1">
    <location>
        <position position="284"/>
    </location>
    <ligand>
        <name>Mn(2+)</name>
        <dbReference type="ChEBI" id="CHEBI:29035"/>
        <label>1</label>
    </ligand>
</feature>
<feature type="binding site" evidence="1">
    <location>
        <position position="298"/>
    </location>
    <ligand>
        <name>ATP</name>
        <dbReference type="ChEBI" id="CHEBI:30616"/>
        <label>1</label>
    </ligand>
</feature>
<feature type="binding site" evidence="1">
    <location>
        <position position="298"/>
    </location>
    <ligand>
        <name>Mg(2+)</name>
        <dbReference type="ChEBI" id="CHEBI:18420"/>
        <label>1</label>
    </ligand>
</feature>
<feature type="binding site" evidence="1">
    <location>
        <position position="298"/>
    </location>
    <ligand>
        <name>Mg(2+)</name>
        <dbReference type="ChEBI" id="CHEBI:18420"/>
        <label>2</label>
    </ligand>
</feature>
<feature type="binding site" evidence="1">
    <location>
        <position position="298"/>
    </location>
    <ligand>
        <name>Mn(2+)</name>
        <dbReference type="ChEBI" id="CHEBI:29035"/>
        <label>1</label>
    </ligand>
</feature>
<feature type="binding site" evidence="1">
    <location>
        <position position="298"/>
    </location>
    <ligand>
        <name>Mn(2+)</name>
        <dbReference type="ChEBI" id="CHEBI:29035"/>
        <label>2</label>
    </ligand>
</feature>
<feature type="binding site" evidence="1">
    <location>
        <position position="300"/>
    </location>
    <ligand>
        <name>Mg(2+)</name>
        <dbReference type="ChEBI" id="CHEBI:18420"/>
        <label>2</label>
    </ligand>
</feature>
<feature type="binding site" evidence="1">
    <location>
        <position position="300"/>
    </location>
    <ligand>
        <name>Mn(2+)</name>
        <dbReference type="ChEBI" id="CHEBI:29035"/>
        <label>2</label>
    </ligand>
</feature>
<feature type="binding site" evidence="1">
    <location>
        <position position="707"/>
    </location>
    <ligand>
        <name>ATP</name>
        <dbReference type="ChEBI" id="CHEBI:30616"/>
        <label>2</label>
    </ligand>
</feature>
<feature type="binding site" evidence="1">
    <location>
        <position position="746"/>
    </location>
    <ligand>
        <name>ATP</name>
        <dbReference type="ChEBI" id="CHEBI:30616"/>
        <label>2</label>
    </ligand>
</feature>
<feature type="binding site" evidence="1">
    <location>
        <position position="748"/>
    </location>
    <ligand>
        <name>ATP</name>
        <dbReference type="ChEBI" id="CHEBI:30616"/>
        <label>2</label>
    </ligand>
</feature>
<feature type="binding site" evidence="1">
    <location>
        <position position="752"/>
    </location>
    <ligand>
        <name>ATP</name>
        <dbReference type="ChEBI" id="CHEBI:30616"/>
        <label>2</label>
    </ligand>
</feature>
<feature type="binding site" evidence="1">
    <location>
        <position position="777"/>
    </location>
    <ligand>
        <name>ATP</name>
        <dbReference type="ChEBI" id="CHEBI:30616"/>
        <label>2</label>
    </ligand>
</feature>
<feature type="binding site" evidence="1">
    <location>
        <position position="778"/>
    </location>
    <ligand>
        <name>ATP</name>
        <dbReference type="ChEBI" id="CHEBI:30616"/>
        <label>2</label>
    </ligand>
</feature>
<feature type="binding site" evidence="1">
    <location>
        <position position="779"/>
    </location>
    <ligand>
        <name>ATP</name>
        <dbReference type="ChEBI" id="CHEBI:30616"/>
        <label>2</label>
    </ligand>
</feature>
<feature type="binding site" evidence="1">
    <location>
        <position position="780"/>
    </location>
    <ligand>
        <name>ATP</name>
        <dbReference type="ChEBI" id="CHEBI:30616"/>
        <label>2</label>
    </ligand>
</feature>
<feature type="binding site" evidence="1">
    <location>
        <position position="820"/>
    </location>
    <ligand>
        <name>ATP</name>
        <dbReference type="ChEBI" id="CHEBI:30616"/>
        <label>2</label>
    </ligand>
</feature>
<feature type="binding site" evidence="1">
    <location>
        <position position="820"/>
    </location>
    <ligand>
        <name>Mg(2+)</name>
        <dbReference type="ChEBI" id="CHEBI:18420"/>
        <label>3</label>
    </ligand>
</feature>
<feature type="binding site" evidence="1">
    <location>
        <position position="820"/>
    </location>
    <ligand>
        <name>Mn(2+)</name>
        <dbReference type="ChEBI" id="CHEBI:29035"/>
        <label>3</label>
    </ligand>
</feature>
<feature type="binding site" evidence="1">
    <location>
        <position position="832"/>
    </location>
    <ligand>
        <name>ATP</name>
        <dbReference type="ChEBI" id="CHEBI:30616"/>
        <label>2</label>
    </ligand>
</feature>
<feature type="binding site" evidence="1">
    <location>
        <position position="832"/>
    </location>
    <ligand>
        <name>Mg(2+)</name>
        <dbReference type="ChEBI" id="CHEBI:18420"/>
        <label>3</label>
    </ligand>
</feature>
<feature type="binding site" evidence="1">
    <location>
        <position position="832"/>
    </location>
    <ligand>
        <name>Mg(2+)</name>
        <dbReference type="ChEBI" id="CHEBI:18420"/>
        <label>4</label>
    </ligand>
</feature>
<feature type="binding site" evidence="1">
    <location>
        <position position="832"/>
    </location>
    <ligand>
        <name>Mn(2+)</name>
        <dbReference type="ChEBI" id="CHEBI:29035"/>
        <label>3</label>
    </ligand>
</feature>
<feature type="binding site" evidence="1">
    <location>
        <position position="832"/>
    </location>
    <ligand>
        <name>Mn(2+)</name>
        <dbReference type="ChEBI" id="CHEBI:29035"/>
        <label>4</label>
    </ligand>
</feature>
<feature type="binding site" evidence="1">
    <location>
        <position position="834"/>
    </location>
    <ligand>
        <name>Mg(2+)</name>
        <dbReference type="ChEBI" id="CHEBI:18420"/>
        <label>4</label>
    </ligand>
</feature>
<feature type="binding site" evidence="1">
    <location>
        <position position="834"/>
    </location>
    <ligand>
        <name>Mn(2+)</name>
        <dbReference type="ChEBI" id="CHEBI:29035"/>
        <label>4</label>
    </ligand>
</feature>